<gene>
    <name type="primary">SLC20A1</name>
    <name type="synonym">GLVR1</name>
    <name type="synonym">PIT1</name>
</gene>
<sequence>MATLITSTTAATAASGPLVDYLWMLILGFIIAFVLAFSVGANDVANSFGTAVGSGVVTLKQACILASIFETVGSVLLGAKVSETIRKGLIDVEMYNSTQGLLMAGSVSAMFGSAVWQLVASFLKLPISGTHCIVGATIGFSLVAKGQEGVKWSELIKIVMSWFVSPLLSGIMSGILFFLVRAFILHKADPVPNGLRALPVFYACTVGINLFSIMYTGAPLLGFDKLPLWGTILISVGCAVFCALIVWFFVCPRMKRKIEREIKCSPSESPLMEKKNSLKEDHEETKLSVGDIENKHPVSEVGPATVPLQAVVEERTVSFKLGDLEEAPERERLPSVDLKEETSIDSTVNGAVQLPNGNLVQFSQAVSNQINSSGHYQYHTVHKDSGLYKELLHKLHLAKVGDCMGDSGDKPLRRNNSYTSYTMAICGMPLDSFRAKEGEQKGEEMEKLTWPNADSKKRIRMDSYTSYCNAVSDLHSASEIDMSVKAEMGLGDRKGSNGSLEEWYDQDKPEVSLLFQFLQILTACFGSFAHGGNDVSNAIGPLVALYLVYDTGDVSSKVATPIWLLLYGGVGICVGLWVWGRRVIQTMGKDLTPITPSSGFSIELASALTVVIASNIGLPISTTHCKVGSVVSVGWLRSKKAVDWRLFRNIFMAWFVTVPISGVISAAIMAIFRYVILRM</sequence>
<name>S20A1_HUMAN</name>
<reference key="1">
    <citation type="journal article" date="1990" name="Cell Growth Differ.">
        <title>Characterization of a human gene conferring sensitivity to infection by gibbon ape leukemia virus.</title>
        <authorList>
            <person name="O'Hara B."/>
            <person name="Johann S.V."/>
            <person name="Klinger H.P."/>
            <person name="Blair D.G."/>
            <person name="Rubinson H."/>
            <person name="Dunn K.J."/>
            <person name="Sass P."/>
            <person name="Vitek S.M."/>
            <person name="Robins T."/>
        </authorList>
    </citation>
    <scope>NUCLEOTIDE SEQUENCE [MRNA]</scope>
    <scope>FUNCTION (MICROBIAL INFECTION)</scope>
    <scope>TISSUE SPECIFICITY</scope>
</reference>
<reference key="2">
    <citation type="journal article" date="2005" name="Nature">
        <title>Generation and annotation of the DNA sequences of human chromosomes 2 and 4.</title>
        <authorList>
            <person name="Hillier L.W."/>
            <person name="Graves T.A."/>
            <person name="Fulton R.S."/>
            <person name="Fulton L.A."/>
            <person name="Pepin K.H."/>
            <person name="Minx P."/>
            <person name="Wagner-McPherson C."/>
            <person name="Layman D."/>
            <person name="Wylie K."/>
            <person name="Sekhon M."/>
            <person name="Becker M.C."/>
            <person name="Fewell G.A."/>
            <person name="Delehaunty K.D."/>
            <person name="Miner T.L."/>
            <person name="Nash W.E."/>
            <person name="Kremitzki C."/>
            <person name="Oddy L."/>
            <person name="Du H."/>
            <person name="Sun H."/>
            <person name="Bradshaw-Cordum H."/>
            <person name="Ali J."/>
            <person name="Carter J."/>
            <person name="Cordes M."/>
            <person name="Harris A."/>
            <person name="Isak A."/>
            <person name="van Brunt A."/>
            <person name="Nguyen C."/>
            <person name="Du F."/>
            <person name="Courtney L."/>
            <person name="Kalicki J."/>
            <person name="Ozersky P."/>
            <person name="Abbott S."/>
            <person name="Armstrong J."/>
            <person name="Belter E.A."/>
            <person name="Caruso L."/>
            <person name="Cedroni M."/>
            <person name="Cotton M."/>
            <person name="Davidson T."/>
            <person name="Desai A."/>
            <person name="Elliott G."/>
            <person name="Erb T."/>
            <person name="Fronick C."/>
            <person name="Gaige T."/>
            <person name="Haakenson W."/>
            <person name="Haglund K."/>
            <person name="Holmes A."/>
            <person name="Harkins R."/>
            <person name="Kim K."/>
            <person name="Kruchowski S.S."/>
            <person name="Strong C.M."/>
            <person name="Grewal N."/>
            <person name="Goyea E."/>
            <person name="Hou S."/>
            <person name="Levy A."/>
            <person name="Martinka S."/>
            <person name="Mead K."/>
            <person name="McLellan M.D."/>
            <person name="Meyer R."/>
            <person name="Randall-Maher J."/>
            <person name="Tomlinson C."/>
            <person name="Dauphin-Kohlberg S."/>
            <person name="Kozlowicz-Reilly A."/>
            <person name="Shah N."/>
            <person name="Swearengen-Shahid S."/>
            <person name="Snider J."/>
            <person name="Strong J.T."/>
            <person name="Thompson J."/>
            <person name="Yoakum M."/>
            <person name="Leonard S."/>
            <person name="Pearman C."/>
            <person name="Trani L."/>
            <person name="Radionenko M."/>
            <person name="Waligorski J.E."/>
            <person name="Wang C."/>
            <person name="Rock S.M."/>
            <person name="Tin-Wollam A.-M."/>
            <person name="Maupin R."/>
            <person name="Latreille P."/>
            <person name="Wendl M.C."/>
            <person name="Yang S.-P."/>
            <person name="Pohl C."/>
            <person name="Wallis J.W."/>
            <person name="Spieth J."/>
            <person name="Bieri T.A."/>
            <person name="Berkowicz N."/>
            <person name="Nelson J.O."/>
            <person name="Osborne J."/>
            <person name="Ding L."/>
            <person name="Meyer R."/>
            <person name="Sabo A."/>
            <person name="Shotland Y."/>
            <person name="Sinha P."/>
            <person name="Wohldmann P.E."/>
            <person name="Cook L.L."/>
            <person name="Hickenbotham M.T."/>
            <person name="Eldred J."/>
            <person name="Williams D."/>
            <person name="Jones T.A."/>
            <person name="She X."/>
            <person name="Ciccarelli F.D."/>
            <person name="Izaurralde E."/>
            <person name="Taylor J."/>
            <person name="Schmutz J."/>
            <person name="Myers R.M."/>
            <person name="Cox D.R."/>
            <person name="Huang X."/>
            <person name="McPherson J.D."/>
            <person name="Mardis E.R."/>
            <person name="Clifton S.W."/>
            <person name="Warren W.C."/>
            <person name="Chinwalla A.T."/>
            <person name="Eddy S.R."/>
            <person name="Marra M.A."/>
            <person name="Ovcharenko I."/>
            <person name="Furey T.S."/>
            <person name="Miller W."/>
            <person name="Eichler E.E."/>
            <person name="Bork P."/>
            <person name="Suyama M."/>
            <person name="Torrents D."/>
            <person name="Waterston R.H."/>
            <person name="Wilson R.K."/>
        </authorList>
    </citation>
    <scope>NUCLEOTIDE SEQUENCE [LARGE SCALE GENOMIC DNA]</scope>
</reference>
<reference key="3">
    <citation type="journal article" date="2004" name="Genome Res.">
        <title>The status, quality, and expansion of the NIH full-length cDNA project: the Mammalian Gene Collection (MGC).</title>
        <authorList>
            <consortium name="The MGC Project Team"/>
        </authorList>
    </citation>
    <scope>NUCLEOTIDE SEQUENCE [LARGE SCALE MRNA]</scope>
    <source>
        <tissue>Kidney</tissue>
        <tissue>Skin</tissue>
    </source>
</reference>
<reference key="4">
    <citation type="journal article" date="1999" name="Gene">
        <title>Characterization of the human Glvr-1 phosphate transporter/retrovirus receptor gene and promoter region.</title>
        <authorList>
            <person name="Palmer G."/>
            <person name="Manen D."/>
            <person name="Bonjour J.-P."/>
            <person name="Caverzasio J."/>
        </authorList>
    </citation>
    <scope>NUCLEOTIDE SEQUENCE [GENOMIC DNA] OF 1-646</scope>
</reference>
<reference key="5">
    <citation type="journal article" date="1992" name="J. Virol.">
        <title>Feline leukemia virus subgroup B uses the same cell surface receptor as gibbon ape leukemia virus.</title>
        <authorList>
            <person name="Takeuchi Y."/>
            <person name="Vile R.G."/>
            <person name="Simpson G."/>
            <person name="O'Hara B."/>
            <person name="Collins M.K."/>
            <person name="Weiss R.A."/>
        </authorList>
    </citation>
    <scope>FUNCTION (MICROBIAL INFECTION)</scope>
</reference>
<reference key="6">
    <citation type="journal article" date="1992" name="J. Virol.">
        <title>GLVR1, a receptor for gibbon ape leukemia virus, is homologous to a phosphate permease of Neurospora crassa and is expressed at high levels in the brain and thymus.</title>
        <authorList>
            <person name="Johann S.V."/>
            <person name="Gibbons J.J."/>
            <person name="O'Hara B."/>
        </authorList>
    </citation>
    <scope>IDENTIFICATION</scope>
</reference>
<reference key="7">
    <citation type="journal article" date="1993" name="J. Virol.">
        <title>Definition of a domain of GLVR1 which is necessary for infection by gibbon ape leukemia virus and which is highly polymorphic between species.</title>
        <authorList>
            <person name="Johann S.V."/>
            <person name="van Zeijl M."/>
            <person name="Cekleniak J."/>
            <person name="O'Hara B."/>
        </authorList>
    </citation>
    <scope>MUTAGENESIS OF 550-ASP--VAL-558 AND ASP-550</scope>
    <scope>REGION</scope>
</reference>
<reference key="8">
    <citation type="journal article" date="1994" name="J. Biol. Chem.">
        <title>The cellular receptor for gibbon ape leukemia virus is a novel high affinity sodium-dependent phosphate transporter.</title>
        <authorList>
            <person name="Olah Z."/>
            <person name="Lehel C."/>
            <person name="Anderson W.B."/>
            <person name="Eiden M.V."/>
            <person name="Wilson C.A."/>
        </authorList>
    </citation>
    <scope>FUNCTION</scope>
    <scope>BIOPHYSICOCHEMICAL PROPERTIES</scope>
    <scope>TRANSPORTER ACTIVITY</scope>
</reference>
<reference key="9">
    <citation type="journal article" date="1994" name="J. Virol.">
        <title>A family of retroviruses that utilize related phosphate transporters for cell entry.</title>
        <authorList>
            <person name="Miller D.G."/>
            <person name="Miller A.D."/>
        </authorList>
    </citation>
    <scope>FUNCTION (MICROBIAL FUNCTION)</scope>
</reference>
<reference key="10">
    <citation type="journal article" date="1994" name="Proc. Natl. Acad. Sci. U.S.A.">
        <title>Cell-surface receptors for gibbon ape leukemia virus and amphotropic murine retrovirus are inducible sodium-dependent phosphate symporters.</title>
        <authorList>
            <person name="Kavanaugh M.P."/>
            <person name="Miller D.G."/>
            <person name="Zhang W."/>
            <person name="Law W."/>
            <person name="Kozak S.L."/>
            <person name="Kabat D."/>
            <person name="Miller A.D."/>
        </authorList>
    </citation>
    <scope>FUNCTION</scope>
    <scope>BIOPHYSICOCHEMICAL PROPERTIES</scope>
    <scope>INDUCTION</scope>
    <scope>TRANSPORTER ACTIVITY</scope>
</reference>
<reference key="11">
    <citation type="journal article" date="2000" name="Circ. Res.">
        <title>Phosphate regulation of vascular smooth muscle cell calcification.</title>
        <authorList>
            <person name="Jono S."/>
            <person name="McKee M.D."/>
            <person name="Murry C.E."/>
            <person name="Shioi A."/>
            <person name="Nishizawa Y."/>
            <person name="Mori K."/>
            <person name="Morii H."/>
            <person name="Giachelli C.M."/>
        </authorList>
    </citation>
    <scope>FUNCTION</scope>
    <scope>TRANSPORTER ACTIVITY</scope>
</reference>
<reference key="12">
    <citation type="journal article" date="2002" name="J. Virol.">
        <title>Reassessing the role of region A in Pit1-mediated viral entry.</title>
        <authorList>
            <person name="Farrell K.B."/>
            <person name="Russ J.L."/>
            <person name="Murthy R.K."/>
            <person name="Eiden M.V."/>
        </authorList>
    </citation>
    <scope>FUNCTION (MICROBIAL INFECTION)</scope>
    <scope>MUTAGENESIS OF ASP-550</scope>
    <scope>REGION</scope>
</reference>
<reference key="13">
    <citation type="journal article" date="2005" name="Arthritis Rheum.">
        <title>Role of interleukin-8 in PiT-1 expression and CXCR1-mediated inorganic phosphate uptake in chondrocytes.</title>
        <authorList>
            <person name="Cecil D.L."/>
            <person name="Rose D.M."/>
            <person name="Terkeltaub R."/>
            <person name="Liu-Bryan R."/>
        </authorList>
    </citation>
    <scope>INDUCTION</scope>
</reference>
<reference key="14">
    <citation type="journal article" date="2006" name="Am. J. Physiol.">
        <title>Characterization of transport mechanisms and determinants critical for Na+-dependent Pi symport of the PiT family paralogs human PiT1 and PiT2.</title>
        <authorList>
            <person name="Boettger P."/>
            <person name="Hede S.E."/>
            <person name="Grunnet M."/>
            <person name="Hoyer B."/>
            <person name="Klaerke D.A."/>
            <person name="Pedersen L."/>
        </authorList>
    </citation>
    <scope>FUNCTION</scope>
    <scope>BIOPHYSICOCHEMICAL PROPERTIES</scope>
    <scope>TRANSPORTER ACTIVITY</scope>
</reference>
<reference key="15">
    <citation type="journal article" date="2007" name="Am. J. Physiol.">
        <title>Deciphering PiT transport kinetics and substrate specificity using electrophysiology and flux measurements.</title>
        <authorList>
            <person name="Ravera S."/>
            <person name="Virkki L.V."/>
            <person name="Murer H."/>
            <person name="Forster I.C."/>
        </authorList>
    </citation>
    <scope>FUNCTION</scope>
    <scope>TRANSPORTER ACTIVITY</scope>
    <scope>STOICHIOMETRY</scope>
</reference>
<reference key="16">
    <citation type="journal article" date="2008" name="Proc. Natl. Acad. Sci. U.S.A.">
        <title>A quantitative atlas of mitotic phosphorylation.</title>
        <authorList>
            <person name="Dephoure N."/>
            <person name="Zhou C."/>
            <person name="Villen J."/>
            <person name="Beausoleil S.A."/>
            <person name="Bakalarski C.E."/>
            <person name="Elledge S.J."/>
            <person name="Gygi S.P."/>
        </authorList>
    </citation>
    <scope>PHOSPHORYLATION [LARGE SCALE ANALYSIS] AT SER-269</scope>
    <scope>IDENTIFICATION BY MASS SPECTROMETRY [LARGE SCALE ANALYSIS]</scope>
    <source>
        <tissue>Cervix carcinoma</tissue>
    </source>
</reference>
<reference key="17">
    <citation type="journal article" date="2009" name="Anal. Chem.">
        <title>Lys-N and trypsin cover complementary parts of the phosphoproteome in a refined SCX-based approach.</title>
        <authorList>
            <person name="Gauci S."/>
            <person name="Helbig A.O."/>
            <person name="Slijper M."/>
            <person name="Krijgsveld J."/>
            <person name="Heck A.J."/>
            <person name="Mohammed S."/>
        </authorList>
    </citation>
    <scope>IDENTIFICATION BY MASS SPECTROMETRY [LARGE SCALE ANALYSIS]</scope>
</reference>
<reference key="18">
    <citation type="journal article" date="2009" name="J. Biol. Chem.">
        <title>Identification of a novel function of PiT1 critical for cell proliferation and independent of its phosphate transport activity.</title>
        <authorList>
            <person name="Beck L."/>
            <person name="Leroy C."/>
            <person name="Salauen C."/>
            <person name="Margall-Ducos G."/>
            <person name="Desdouets C."/>
            <person name="Friedlander G."/>
        </authorList>
    </citation>
    <scope>FUNCTION</scope>
    <scope>TRANSPORTER ACTIVITY</scope>
    <scope>SUBCELLULAR LOCATION</scope>
    <scope>MUTAGENESIS OF SER-128</scope>
</reference>
<reference key="19">
    <citation type="journal article" date="2013" name="J. Proteome Res.">
        <title>Toward a comprehensive characterization of a human cancer cell phosphoproteome.</title>
        <authorList>
            <person name="Zhou H."/>
            <person name="Di Palma S."/>
            <person name="Preisinger C."/>
            <person name="Peng M."/>
            <person name="Polat A.N."/>
            <person name="Heck A.J."/>
            <person name="Mohammed S."/>
        </authorList>
    </citation>
    <scope>PHOSPHORYLATION [LARGE SCALE ANALYSIS] AT SER-265 AND SER-269</scope>
    <scope>IDENTIFICATION BY MASS SPECTROMETRY [LARGE SCALE ANALYSIS]</scope>
    <source>
        <tissue>Erythroleukemia</tissue>
    </source>
</reference>
<accession>Q8WUM9</accession>
<accession>Q08344</accession>
<accession>Q6DHX8</accession>
<accession>Q9UQ82</accession>
<dbReference type="EMBL" id="L20859">
    <property type="protein sequence ID" value="AAA52572.1"/>
    <property type="molecule type" value="mRNA"/>
</dbReference>
<dbReference type="EMBL" id="AC079922">
    <property type="protein sequence ID" value="AAY14922.1"/>
    <property type="molecule type" value="Genomic_DNA"/>
</dbReference>
<dbReference type="EMBL" id="BC019944">
    <property type="protein sequence ID" value="AAH19944.1"/>
    <property type="molecule type" value="mRNA"/>
</dbReference>
<dbReference type="EMBL" id="BC075818">
    <property type="protein sequence ID" value="AAH75818.1"/>
    <property type="molecule type" value="mRNA"/>
</dbReference>
<dbReference type="EMBL" id="AH007490">
    <property type="protein sequence ID" value="AAD20286.1"/>
    <property type="molecule type" value="Genomic_DNA"/>
</dbReference>
<dbReference type="CCDS" id="CCDS2099.1"/>
<dbReference type="PIR" id="I52822">
    <property type="entry name" value="I52822"/>
</dbReference>
<dbReference type="RefSeq" id="NP_005406.3">
    <property type="nucleotide sequence ID" value="NM_005415.4"/>
</dbReference>
<dbReference type="SMR" id="Q8WUM9"/>
<dbReference type="BioGRID" id="112462">
    <property type="interactions" value="134"/>
</dbReference>
<dbReference type="FunCoup" id="Q8WUM9">
    <property type="interactions" value="855"/>
</dbReference>
<dbReference type="IntAct" id="Q8WUM9">
    <property type="interactions" value="65"/>
</dbReference>
<dbReference type="MINT" id="Q8WUM9"/>
<dbReference type="STRING" id="9606.ENSP00000272542"/>
<dbReference type="BindingDB" id="Q8WUM9"/>
<dbReference type="ChEMBL" id="CHEMBL4295909"/>
<dbReference type="DrugBank" id="DB11348">
    <property type="generic name" value="Calcium Phosphate"/>
</dbReference>
<dbReference type="DrugBank" id="DB14481">
    <property type="generic name" value="Calcium phosphate dihydrate"/>
</dbReference>
<dbReference type="DrugBank" id="DB01250">
    <property type="generic name" value="Olsalazine"/>
</dbReference>
<dbReference type="DrugBank" id="DB14502">
    <property type="generic name" value="Sodium phosphate, dibasic"/>
</dbReference>
<dbReference type="DrugBank" id="DB09449">
    <property type="generic name" value="Sodium phosphate, monobasic"/>
</dbReference>
<dbReference type="DrugBank" id="DB14503">
    <property type="generic name" value="Sodium phosphate, monobasic, unspecified form"/>
</dbReference>
<dbReference type="DrugBank" id="DB09436">
    <property type="generic name" value="Technetium Tc-99m succimer"/>
</dbReference>
<dbReference type="TCDB" id="2.A.20.2.7">
    <property type="family name" value="the inorganic phosphate transporter (pit) family"/>
</dbReference>
<dbReference type="GlyConnect" id="2080">
    <property type="glycosylation" value="1 N-Linked glycan (1 site)"/>
</dbReference>
<dbReference type="GlyCosmos" id="Q8WUM9">
    <property type="glycosylation" value="1 site, 2 glycans"/>
</dbReference>
<dbReference type="GlyGen" id="Q8WUM9">
    <property type="glycosylation" value="3 sites, 2 N-linked glycans (1 site), 1 O-linked glycan (1 site)"/>
</dbReference>
<dbReference type="iPTMnet" id="Q8WUM9"/>
<dbReference type="PhosphoSitePlus" id="Q8WUM9"/>
<dbReference type="SwissPalm" id="Q8WUM9"/>
<dbReference type="BioMuta" id="SLC20A1"/>
<dbReference type="DMDM" id="74730735"/>
<dbReference type="jPOST" id="Q8WUM9"/>
<dbReference type="MassIVE" id="Q8WUM9"/>
<dbReference type="PaxDb" id="9606-ENSP00000272542"/>
<dbReference type="PeptideAtlas" id="Q8WUM9"/>
<dbReference type="ProteomicsDB" id="74696"/>
<dbReference type="Pumba" id="Q8WUM9"/>
<dbReference type="Antibodypedia" id="33281">
    <property type="antibodies" value="174 antibodies from 29 providers"/>
</dbReference>
<dbReference type="DNASU" id="6574"/>
<dbReference type="Ensembl" id="ENST00000272542.8">
    <property type="protein sequence ID" value="ENSP00000272542.3"/>
    <property type="gene ID" value="ENSG00000144136.11"/>
</dbReference>
<dbReference type="GeneID" id="6574"/>
<dbReference type="KEGG" id="hsa:6574"/>
<dbReference type="MANE-Select" id="ENST00000272542.8">
    <property type="protein sequence ID" value="ENSP00000272542.3"/>
    <property type="RefSeq nucleotide sequence ID" value="NM_005415.5"/>
    <property type="RefSeq protein sequence ID" value="NP_005406.3"/>
</dbReference>
<dbReference type="UCSC" id="uc002tib.4">
    <property type="organism name" value="human"/>
</dbReference>
<dbReference type="AGR" id="HGNC:10946"/>
<dbReference type="CTD" id="6574"/>
<dbReference type="DisGeNET" id="6574"/>
<dbReference type="GeneCards" id="SLC20A1"/>
<dbReference type="HGNC" id="HGNC:10946">
    <property type="gene designation" value="SLC20A1"/>
</dbReference>
<dbReference type="HPA" id="ENSG00000144136">
    <property type="expression patterns" value="Low tissue specificity"/>
</dbReference>
<dbReference type="MIM" id="137570">
    <property type="type" value="gene"/>
</dbReference>
<dbReference type="neXtProt" id="NX_Q8WUM9"/>
<dbReference type="OpenTargets" id="ENSG00000144136"/>
<dbReference type="PharmGKB" id="PA35833"/>
<dbReference type="VEuPathDB" id="HostDB:ENSG00000144136"/>
<dbReference type="eggNOG" id="KOG2493">
    <property type="taxonomic scope" value="Eukaryota"/>
</dbReference>
<dbReference type="GeneTree" id="ENSGT00390000014879"/>
<dbReference type="HOGENOM" id="CLU_015355_3_1_1"/>
<dbReference type="InParanoid" id="Q8WUM9"/>
<dbReference type="OMA" id="AGFWFFG"/>
<dbReference type="OrthoDB" id="260807at2759"/>
<dbReference type="PAN-GO" id="Q8WUM9">
    <property type="GO annotations" value="2 GO annotations based on evolutionary models"/>
</dbReference>
<dbReference type="PhylomeDB" id="Q8WUM9"/>
<dbReference type="TreeFam" id="TF314426"/>
<dbReference type="BioCyc" id="MetaCyc:ENSG00000144136-MONOMER"/>
<dbReference type="BRENDA" id="7.3.2.1">
    <property type="organism ID" value="2681"/>
</dbReference>
<dbReference type="PathwayCommons" id="Q8WUM9"/>
<dbReference type="Reactome" id="R-HSA-427652">
    <property type="pathway name" value="Sodium-coupled phosphate cotransporters"/>
</dbReference>
<dbReference type="SignaLink" id="Q8WUM9"/>
<dbReference type="SIGNOR" id="Q8WUM9"/>
<dbReference type="BioGRID-ORCS" id="6574">
    <property type="hits" value="108 hits in 1162 CRISPR screens"/>
</dbReference>
<dbReference type="ChiTaRS" id="SLC20A1">
    <property type="organism name" value="human"/>
</dbReference>
<dbReference type="GeneWiki" id="SLC20A1"/>
<dbReference type="GenomeRNAi" id="6574"/>
<dbReference type="Pharos" id="Q8WUM9">
    <property type="development level" value="Tbio"/>
</dbReference>
<dbReference type="PRO" id="PR:Q8WUM9"/>
<dbReference type="Proteomes" id="UP000005640">
    <property type="component" value="Chromosome 2"/>
</dbReference>
<dbReference type="RNAct" id="Q8WUM9">
    <property type="molecule type" value="protein"/>
</dbReference>
<dbReference type="Bgee" id="ENSG00000144136">
    <property type="expression patterns" value="Expressed in mucosa of transverse colon and 202 other cell types or tissues"/>
</dbReference>
<dbReference type="ExpressionAtlas" id="Q8WUM9">
    <property type="expression patterns" value="baseline and differential"/>
</dbReference>
<dbReference type="GO" id="GO:0016020">
    <property type="term" value="C:membrane"/>
    <property type="evidence" value="ECO:0000304"/>
    <property type="project" value="ProtInc"/>
</dbReference>
<dbReference type="GO" id="GO:0005886">
    <property type="term" value="C:plasma membrane"/>
    <property type="evidence" value="ECO:0000314"/>
    <property type="project" value="UniProtKB"/>
</dbReference>
<dbReference type="GO" id="GO:0005316">
    <property type="term" value="F:high-affinity phosphate:sodium symporter activity"/>
    <property type="evidence" value="ECO:0007669"/>
    <property type="project" value="Ensembl"/>
</dbReference>
<dbReference type="GO" id="GO:0005315">
    <property type="term" value="F:phosphate transmembrane transporter activity"/>
    <property type="evidence" value="ECO:0000318"/>
    <property type="project" value="GO_Central"/>
</dbReference>
<dbReference type="GO" id="GO:0038023">
    <property type="term" value="F:signaling receptor activity"/>
    <property type="evidence" value="ECO:0000304"/>
    <property type="project" value="ProtInc"/>
</dbReference>
<dbReference type="GO" id="GO:0005436">
    <property type="term" value="F:sodium:phosphate symporter activity"/>
    <property type="evidence" value="ECO:0000314"/>
    <property type="project" value="UniProtKB"/>
</dbReference>
<dbReference type="GO" id="GO:0031214">
    <property type="term" value="P:biomineral tissue development"/>
    <property type="evidence" value="ECO:0007669"/>
    <property type="project" value="Ensembl"/>
</dbReference>
<dbReference type="GO" id="GO:0008283">
    <property type="term" value="P:cell population proliferation"/>
    <property type="evidence" value="ECO:0000314"/>
    <property type="project" value="UniProtKB"/>
</dbReference>
<dbReference type="GO" id="GO:0006811">
    <property type="term" value="P:monoatomic ion transport"/>
    <property type="evidence" value="ECO:0000304"/>
    <property type="project" value="Reactome"/>
</dbReference>
<dbReference type="GO" id="GO:0035435">
    <property type="term" value="P:phosphate ion transmembrane transport"/>
    <property type="evidence" value="ECO:0000318"/>
    <property type="project" value="GO_Central"/>
</dbReference>
<dbReference type="GO" id="GO:0006796">
    <property type="term" value="P:phosphate-containing compound metabolic process"/>
    <property type="evidence" value="ECO:0000304"/>
    <property type="project" value="ProtInc"/>
</dbReference>
<dbReference type="GO" id="GO:0043123">
    <property type="term" value="P:positive regulation of canonical NF-kappaB signal transduction"/>
    <property type="evidence" value="ECO:0007001"/>
    <property type="project" value="UniProtKB"/>
</dbReference>
<dbReference type="InterPro" id="IPR001204">
    <property type="entry name" value="Phos_transporter"/>
</dbReference>
<dbReference type="PANTHER" id="PTHR11101">
    <property type="entry name" value="PHOSPHATE TRANSPORTER"/>
    <property type="match status" value="1"/>
</dbReference>
<dbReference type="PANTHER" id="PTHR11101:SF46">
    <property type="entry name" value="SODIUM-DEPENDENT PHOSPHATE TRANSPORTER 1"/>
    <property type="match status" value="1"/>
</dbReference>
<dbReference type="Pfam" id="PF01384">
    <property type="entry name" value="PHO4"/>
    <property type="match status" value="1"/>
</dbReference>
<comment type="function">
    <text evidence="2 6 7 8 10 12">Sodium-phosphate symporter which preferentially transports the monovalent form of phosphate with a stoichiometry of two sodium ions per phosphate ion (PubMed:11009570, PubMed:16790504, PubMed:17494632, PubMed:19726692, PubMed:7929240, PubMed:8041748). May play a role in extracellular matrix and cartilage calcification as well as in vascular calcification (PubMed:11009570). Essential for cell proliferation but this function is independent of its phosphate transporter activity (PubMed:19726692).</text>
</comment>
<comment type="function">
    <text evidence="3 4 9 11">(Microbial infection) May function as a retroviral receptor as it confers human cells susceptibility to infection to Gibbon Ape Leukemia Virus (GaLV), Simian sarcoma-associated virus (SSAV) and Feline leukemia virus subgroup B (FeLV-B) as well as 10A1 murine leukemia virus (10A1 MLV).</text>
</comment>
<comment type="catalytic activity">
    <reaction evidence="2 6 7 8 10 12">
        <text>2 Na(+)(out) + phosphate(out) = 2 Na(+)(in) + phosphate(in)</text>
        <dbReference type="Rhea" id="RHEA:71259"/>
        <dbReference type="ChEBI" id="CHEBI:29101"/>
        <dbReference type="ChEBI" id="CHEBI:43474"/>
    </reaction>
</comment>
<comment type="biophysicochemical properties">
    <kinetics>
        <KM evidence="10 12">24.1 uM for phosphate</KM>
        <KM evidence="6">322.5 uM for phosphate</KM>
        <Vmax evidence="10 12">1.9 nmol/min/mg enzyme (in the presence of 0.05-2 mM phosphate)</Vmax>
        <text>With an increase in pH, a decrease in phosphate uptake is observed.</text>
    </kinetics>
    <phDependence>
        <text evidence="10 12">Optimum pH is 6.5 and 7.5.</text>
    </phDependence>
</comment>
<comment type="subcellular location">
    <subcellularLocation>
        <location evidence="8">Cell membrane</location>
        <topology evidence="1">Multi-pass membrane protein</topology>
    </subcellularLocation>
</comment>
<comment type="tissue specificity">
    <text evidence="9">Ubiquitously expressed.</text>
</comment>
<comment type="induction">
    <text evidence="5 12">By phosphate deprivation as well as by IL8/interleukin-8 in hypertrophic chondrocytes.</text>
</comment>
<comment type="domain">
    <text>Region A confers human cells susceptibility to infection by Gibbon Ape Leukemia Virus (GaLV) and Feline leukemia virus subgroup B (FeLV-B). Substitution of Human SLC20A1 region A by region A of murine SLC20A1 prevents viral infection.</text>
</comment>
<comment type="similarity">
    <text evidence="14">Belongs to the inorganic phosphate transporter (PiT) (TC 2.A.20) family.</text>
</comment>
<protein>
    <recommendedName>
        <fullName>Sodium-dependent phosphate transporter 1</fullName>
    </recommendedName>
    <alternativeName>
        <fullName>Gibbon ape leukemia virus receptor 1</fullName>
        <shortName>GLVR-1</shortName>
    </alternativeName>
    <alternativeName>
        <fullName>Leukemia virus receptor 1 homolog</fullName>
    </alternativeName>
    <alternativeName>
        <fullName>Phosphate transporter 1</fullName>
        <shortName>PiT-1</shortName>
    </alternativeName>
    <alternativeName>
        <fullName>Solute carrier family 20 member 1</fullName>
    </alternativeName>
</protein>
<keyword id="KW-1003">Cell membrane</keyword>
<keyword id="KW-0945">Host-virus interaction</keyword>
<keyword id="KW-0472">Membrane</keyword>
<keyword id="KW-0592">Phosphate transport</keyword>
<keyword id="KW-0597">Phosphoprotein</keyword>
<keyword id="KW-1267">Proteomics identification</keyword>
<keyword id="KW-0675">Receptor</keyword>
<keyword id="KW-1185">Reference proteome</keyword>
<keyword id="KW-0769">Symport</keyword>
<keyword id="KW-0812">Transmembrane</keyword>
<keyword id="KW-1133">Transmembrane helix</keyword>
<keyword id="KW-0813">Transport</keyword>
<organism>
    <name type="scientific">Homo sapiens</name>
    <name type="common">Human</name>
    <dbReference type="NCBI Taxonomy" id="9606"/>
    <lineage>
        <taxon>Eukaryota</taxon>
        <taxon>Metazoa</taxon>
        <taxon>Chordata</taxon>
        <taxon>Craniata</taxon>
        <taxon>Vertebrata</taxon>
        <taxon>Euteleostomi</taxon>
        <taxon>Mammalia</taxon>
        <taxon>Eutheria</taxon>
        <taxon>Euarchontoglires</taxon>
        <taxon>Primates</taxon>
        <taxon>Haplorrhini</taxon>
        <taxon>Catarrhini</taxon>
        <taxon>Hominidae</taxon>
        <taxon>Homo</taxon>
    </lineage>
</organism>
<evidence type="ECO:0000255" key="1"/>
<evidence type="ECO:0000269" key="2">
    <source>
    </source>
</evidence>
<evidence type="ECO:0000269" key="3">
    <source>
    </source>
</evidence>
<evidence type="ECO:0000269" key="4">
    <source>
    </source>
</evidence>
<evidence type="ECO:0000269" key="5">
    <source>
    </source>
</evidence>
<evidence type="ECO:0000269" key="6">
    <source>
    </source>
</evidence>
<evidence type="ECO:0000269" key="7">
    <source>
    </source>
</evidence>
<evidence type="ECO:0000269" key="8">
    <source>
    </source>
</evidence>
<evidence type="ECO:0000269" key="9">
    <source>
    </source>
</evidence>
<evidence type="ECO:0000269" key="10">
    <source>
    </source>
</evidence>
<evidence type="ECO:0000269" key="11">
    <source>
    </source>
</evidence>
<evidence type="ECO:0000269" key="12">
    <source>
    </source>
</evidence>
<evidence type="ECO:0000269" key="13">
    <source>
    </source>
</evidence>
<evidence type="ECO:0000305" key="14"/>
<evidence type="ECO:0007744" key="15">
    <source>
    </source>
</evidence>
<evidence type="ECO:0007744" key="16">
    <source>
    </source>
</evidence>
<proteinExistence type="evidence at protein level"/>
<feature type="chain" id="PRO_0000080771" description="Sodium-dependent phosphate transporter 1">
    <location>
        <begin position="1"/>
        <end position="679"/>
    </location>
</feature>
<feature type="transmembrane region" description="Helical" evidence="1">
    <location>
        <begin position="21"/>
        <end position="41"/>
    </location>
</feature>
<feature type="transmembrane region" description="Helical" evidence="1">
    <location>
        <begin position="62"/>
        <end position="82"/>
    </location>
</feature>
<feature type="transmembrane region" description="Helical" evidence="1">
    <location>
        <begin position="100"/>
        <end position="120"/>
    </location>
</feature>
<feature type="transmembrane region" description="Helical" evidence="1">
    <location>
        <begin position="158"/>
        <end position="178"/>
    </location>
</feature>
<feature type="transmembrane region" description="Helical" evidence="1">
    <location>
        <begin position="203"/>
        <end position="223"/>
    </location>
</feature>
<feature type="transmembrane region" description="Helical" evidence="1">
    <location>
        <begin position="230"/>
        <end position="250"/>
    </location>
</feature>
<feature type="transmembrane region" description="Helical" evidence="1">
    <location>
        <begin position="511"/>
        <end position="531"/>
    </location>
</feature>
<feature type="transmembrane region" description="Helical" evidence="1">
    <location>
        <begin position="558"/>
        <end position="578"/>
    </location>
</feature>
<feature type="transmembrane region" description="Helical" evidence="1">
    <location>
        <begin position="600"/>
        <end position="620"/>
    </location>
</feature>
<feature type="transmembrane region" description="Helical" evidence="1">
    <location>
        <begin position="650"/>
        <end position="670"/>
    </location>
</feature>
<feature type="region of interest" description="A">
    <location>
        <begin position="550"/>
        <end position="558"/>
    </location>
</feature>
<feature type="modified residue" description="Phosphoserine" evidence="16">
    <location>
        <position position="265"/>
    </location>
</feature>
<feature type="modified residue" description="Phosphoserine" evidence="15 16">
    <location>
        <position position="269"/>
    </location>
</feature>
<feature type="mutagenesis site" description="Loss of sodium-dependent phosphate transporter activity. Able to restore cell proliferation in SLC20A1-deficient HeLa cells to a level identical to that observed in their wild-type counterpart. No effect on its localization to the cell membrane." evidence="8">
    <original>S</original>
    <variation>A</variation>
    <location>
        <position position="128"/>
    </location>
</feature>
<feature type="mutagenesis site" description="Loss of virus infectibility." evidence="13">
    <original>DTGDVSSKV</original>
    <variation>KQEASTKA</variation>
    <location>
        <begin position="550"/>
        <end position="558"/>
    </location>
</feature>
<feature type="mutagenesis site" description="Drastic reduction of virus infectibility, but conserved virus binding ability." evidence="3 13">
    <original>D</original>
    <variation>K</variation>
    <location>
        <position position="550"/>
    </location>
</feature>
<feature type="mutagenesis site" description="Loss of virus infectibility." evidence="3 13">
    <location>
        <position position="550"/>
    </location>
</feature>
<feature type="sequence conflict" description="In Ref. 1; AAA52572." evidence="14" ref="1">
    <original>Y</original>
    <variation>S</variation>
    <location>
        <position position="376"/>
    </location>
</feature>
<feature type="sequence conflict" description="In Ref. 4; AAD20286." evidence="14" ref="4">
    <original>E</original>
    <variation>R</variation>
    <location>
        <position position="443"/>
    </location>
</feature>
<feature type="sequence conflict" description="In Ref. 1; AAA52572." evidence="14" ref="1">
    <original>E</original>
    <variation>A</variation>
    <location>
        <position position="487"/>
    </location>
</feature>